<proteinExistence type="evidence at transcript level"/>
<sequence length="854" mass="95133">MDEAAAAEAVQLIDGEGEFAADSAERFMAAAGVAGCGLSYAVVSIMGPQSSGKSTLLNQLFGTNFREMDAFRGRSQTTKGIWIARCVGVEPCTVVMDLEGTDGRERGEDDTAFEKQSSLFALAISDIVLINMWCHDIGREQAANKPLLKTVFQVMMRLFSPRKTTLLFVIRDKTRTPLEHLEPVLREDIQKIWNSVAKPEAHKDTPISEFFNVQVTALPSFEEKEEQFREQVQQLRQRFSNSIAPGGLAGDRRGVVPASGFLFSSQQIWKVIRENKDLDLPAHKVMVATVRCDEIAHEKFSCLTSDAEWMELESDVQSGPVPGFGKKLGYIVDVHMQEYDKEAIYFDEAVRTAKRQLLKSRVLNLVQPAFQKMLAHLRTRALEKYKTELNLTLESGKGFAAAVRDTTESNLNEFDQGCADAVIEQADWDYSKILEKVRRDVEDHTLSIREGKLSELTNHAKEKLRKALVEPVESLFDAAGPSTWASIRNLFKRETEAILPEFQKNLAGFEMESATSEGMVSKLRDYARSIVENKAKEEAGKVLIHMKERFTTVFSHDKDSIPRVWTGKEDVRAIAKDARSAALKLLSVLAAIRWDEKPDKIEKILTSTLLDGSVTPKSKGASASSDPLASTTWEEVSPKYTLITPSQCKSLWKQFKAETEFAITQAVSTQQAHKRGNGRLPPPWAMVAIAVLGFNEIMTLLRNPIYLFLLFVGYLLVKALAVQLDINREFQNGVVPGIISVTAKLIPTLQNILNKVATEQQQQQGHHQDAAAEAPQQQQQPQPQPPPLLLSPRSPMSELRRPLHMPFSPVRKAVSPSPSSSSSTVTSPRNAGEDQKPRQMVQPDNESNNAYSIV</sequence>
<feature type="chain" id="PRO_0000407758" description="Protein ROOT HAIR DEFECTIVE 3 homolog 1">
    <location>
        <begin position="1"/>
        <end position="854"/>
    </location>
</feature>
<feature type="topological domain" description="Cytoplasmic" evidence="1">
    <location>
        <begin position="1"/>
        <end position="680"/>
    </location>
</feature>
<feature type="transmembrane region" description="Helical" evidence="1">
    <location>
        <begin position="681"/>
        <end position="701"/>
    </location>
</feature>
<feature type="topological domain" description="Lumenal" evidence="1">
    <location>
        <begin position="702"/>
        <end position="704"/>
    </location>
</feature>
<feature type="transmembrane region" description="Helical" evidence="1">
    <location>
        <begin position="705"/>
        <end position="725"/>
    </location>
</feature>
<feature type="topological domain" description="Cytoplasmic" evidence="1">
    <location>
        <begin position="726"/>
        <end position="854"/>
    </location>
</feature>
<feature type="domain" description="GB1/RHD3-type G" evidence="2">
    <location>
        <begin position="37"/>
        <end position="252"/>
    </location>
</feature>
<feature type="region of interest" description="Disordered" evidence="3">
    <location>
        <begin position="758"/>
        <end position="854"/>
    </location>
</feature>
<feature type="coiled-coil region" evidence="1">
    <location>
        <begin position="217"/>
        <end position="242"/>
    </location>
</feature>
<feature type="compositionally biased region" description="Low complexity" evidence="3">
    <location>
        <begin position="758"/>
        <end position="781"/>
    </location>
</feature>
<feature type="compositionally biased region" description="Low complexity" evidence="3">
    <location>
        <begin position="814"/>
        <end position="828"/>
    </location>
</feature>
<feature type="compositionally biased region" description="Polar residues" evidence="3">
    <location>
        <begin position="842"/>
        <end position="854"/>
    </location>
</feature>
<feature type="binding site" evidence="1">
    <location>
        <begin position="47"/>
        <end position="54"/>
    </location>
    <ligand>
        <name>GTP</name>
        <dbReference type="ChEBI" id="CHEBI:37565"/>
    </ligand>
</feature>
<feature type="sequence conflict" description="In Ref. 5; AK070939." evidence="4" ref="5">
    <original>V</original>
    <variation>I</variation>
    <location>
        <position position="741"/>
    </location>
</feature>
<evidence type="ECO:0000255" key="1">
    <source>
        <dbReference type="HAMAP-Rule" id="MF_03109"/>
    </source>
</evidence>
<evidence type="ECO:0000255" key="2">
    <source>
        <dbReference type="PROSITE-ProRule" id="PRU01052"/>
    </source>
</evidence>
<evidence type="ECO:0000256" key="3">
    <source>
        <dbReference type="SAM" id="MobiDB-lite"/>
    </source>
</evidence>
<evidence type="ECO:0000305" key="4"/>
<name>RHD31_ORYSJ</name>
<comment type="function">
    <text evidence="1">Probable GTP-binding protein that may be involved in cell development.</text>
</comment>
<comment type="subcellular location">
    <subcellularLocation>
        <location evidence="1">Endoplasmic reticulum membrane</location>
        <topology evidence="1">Multi-pass membrane protein</topology>
    </subcellularLocation>
</comment>
<comment type="similarity">
    <text evidence="2">Belongs to the TRAFAC class dynamin-like GTPase superfamily. GB1/RHD3 GTPase family. RHD3 subfamily.</text>
</comment>
<gene>
    <name type="ordered locus">Os12g0604600</name>
    <name type="ordered locus">LOC_Os12g41170</name>
</gene>
<organism>
    <name type="scientific">Oryza sativa subsp. japonica</name>
    <name type="common">Rice</name>
    <dbReference type="NCBI Taxonomy" id="39947"/>
    <lineage>
        <taxon>Eukaryota</taxon>
        <taxon>Viridiplantae</taxon>
        <taxon>Streptophyta</taxon>
        <taxon>Embryophyta</taxon>
        <taxon>Tracheophyta</taxon>
        <taxon>Spermatophyta</taxon>
        <taxon>Magnoliopsida</taxon>
        <taxon>Liliopsida</taxon>
        <taxon>Poales</taxon>
        <taxon>Poaceae</taxon>
        <taxon>BOP clade</taxon>
        <taxon>Oryzoideae</taxon>
        <taxon>Oryzeae</taxon>
        <taxon>Oryzinae</taxon>
        <taxon>Oryza</taxon>
        <taxon>Oryza sativa</taxon>
    </lineage>
</organism>
<reference key="1">
    <citation type="journal article" date="2005" name="BMC Biol.">
        <title>The sequence of rice chromosomes 11 and 12, rich in disease resistance genes and recent gene duplications.</title>
        <authorList>
            <consortium name="The rice chromosomes 11 and 12 sequencing consortia"/>
        </authorList>
    </citation>
    <scope>NUCLEOTIDE SEQUENCE [LARGE SCALE GENOMIC DNA]</scope>
    <source>
        <strain>cv. Nipponbare</strain>
    </source>
</reference>
<reference key="2">
    <citation type="journal article" date="2005" name="Nature">
        <title>The map-based sequence of the rice genome.</title>
        <authorList>
            <consortium name="International rice genome sequencing project (IRGSP)"/>
        </authorList>
    </citation>
    <scope>NUCLEOTIDE SEQUENCE [LARGE SCALE GENOMIC DNA]</scope>
    <source>
        <strain>cv. Nipponbare</strain>
    </source>
</reference>
<reference key="3">
    <citation type="journal article" date="2008" name="Nucleic Acids Res.">
        <title>The rice annotation project database (RAP-DB): 2008 update.</title>
        <authorList>
            <consortium name="The rice annotation project (RAP)"/>
        </authorList>
    </citation>
    <scope>GENOME REANNOTATION</scope>
    <source>
        <strain>cv. Nipponbare</strain>
    </source>
</reference>
<reference key="4">
    <citation type="journal article" date="2013" name="Rice">
        <title>Improvement of the Oryza sativa Nipponbare reference genome using next generation sequence and optical map data.</title>
        <authorList>
            <person name="Kawahara Y."/>
            <person name="de la Bastide M."/>
            <person name="Hamilton J.P."/>
            <person name="Kanamori H."/>
            <person name="McCombie W.R."/>
            <person name="Ouyang S."/>
            <person name="Schwartz D.C."/>
            <person name="Tanaka T."/>
            <person name="Wu J."/>
            <person name="Zhou S."/>
            <person name="Childs K.L."/>
            <person name="Davidson R.M."/>
            <person name="Lin H."/>
            <person name="Quesada-Ocampo L."/>
            <person name="Vaillancourt B."/>
            <person name="Sakai H."/>
            <person name="Lee S.S."/>
            <person name="Kim J."/>
            <person name="Numa H."/>
            <person name="Itoh T."/>
            <person name="Buell C.R."/>
            <person name="Matsumoto T."/>
        </authorList>
    </citation>
    <scope>GENOME REANNOTATION</scope>
    <source>
        <strain>cv. Nipponbare</strain>
    </source>
</reference>
<reference key="5">
    <citation type="journal article" date="2003" name="Science">
        <title>Collection, mapping, and annotation of over 28,000 cDNA clones from japonica rice.</title>
        <authorList>
            <consortium name="The rice full-length cDNA consortium"/>
        </authorList>
    </citation>
    <scope>NUCLEOTIDE SEQUENCE [LARGE SCALE MRNA]</scope>
    <source>
        <strain>cv. Nipponbare</strain>
    </source>
</reference>
<accession>Q2QMH2</accession>
<accession>A0A0P0YC71</accession>
<dbReference type="EC" id="3.6.5.-" evidence="1"/>
<dbReference type="EMBL" id="DP000011">
    <property type="protein sequence ID" value="ABA99822.1"/>
    <property type="molecule type" value="Genomic_DNA"/>
</dbReference>
<dbReference type="EMBL" id="AP008218">
    <property type="protein sequence ID" value="BAF30237.1"/>
    <property type="molecule type" value="Genomic_DNA"/>
</dbReference>
<dbReference type="EMBL" id="AP014968">
    <property type="protein sequence ID" value="BAT17974.1"/>
    <property type="molecule type" value="Genomic_DNA"/>
</dbReference>
<dbReference type="EMBL" id="AK070939">
    <property type="status" value="NOT_ANNOTATED_CDS"/>
    <property type="molecule type" value="mRNA"/>
</dbReference>
<dbReference type="RefSeq" id="XP_015618224.1">
    <property type="nucleotide sequence ID" value="XM_015762738.1"/>
</dbReference>
<dbReference type="SMR" id="Q2QMH2"/>
<dbReference type="FunCoup" id="Q2QMH2">
    <property type="interactions" value="129"/>
</dbReference>
<dbReference type="STRING" id="39947.Q2QMH2"/>
<dbReference type="PaxDb" id="39947-Q2QMH2"/>
<dbReference type="EnsemblPlants" id="Os12t0604600-01">
    <property type="protein sequence ID" value="Os12t0604600-01"/>
    <property type="gene ID" value="Os12g0604600"/>
</dbReference>
<dbReference type="Gramene" id="Os12t0604600-01">
    <property type="protein sequence ID" value="Os12t0604600-01"/>
    <property type="gene ID" value="Os12g0604600"/>
</dbReference>
<dbReference type="KEGG" id="dosa:Os12g0604600"/>
<dbReference type="eggNOG" id="KOG2203">
    <property type="taxonomic scope" value="Eukaryota"/>
</dbReference>
<dbReference type="HOGENOM" id="CLU_011270_1_0_1"/>
<dbReference type="InParanoid" id="Q2QMH2"/>
<dbReference type="OMA" id="SYAHEEE"/>
<dbReference type="OrthoDB" id="1597724at2759"/>
<dbReference type="Proteomes" id="UP000000763">
    <property type="component" value="Chromosome 12"/>
</dbReference>
<dbReference type="Proteomes" id="UP000059680">
    <property type="component" value="Chromosome 12"/>
</dbReference>
<dbReference type="GO" id="GO:0005783">
    <property type="term" value="C:endoplasmic reticulum"/>
    <property type="evidence" value="ECO:0000318"/>
    <property type="project" value="GO_Central"/>
</dbReference>
<dbReference type="GO" id="GO:0005789">
    <property type="term" value="C:endoplasmic reticulum membrane"/>
    <property type="evidence" value="ECO:0007669"/>
    <property type="project" value="UniProtKB-SubCell"/>
</dbReference>
<dbReference type="GO" id="GO:0005525">
    <property type="term" value="F:GTP binding"/>
    <property type="evidence" value="ECO:0007669"/>
    <property type="project" value="UniProtKB-UniRule"/>
</dbReference>
<dbReference type="GO" id="GO:0003924">
    <property type="term" value="F:GTPase activity"/>
    <property type="evidence" value="ECO:0000318"/>
    <property type="project" value="GO_Central"/>
</dbReference>
<dbReference type="GO" id="GO:0016320">
    <property type="term" value="P:endoplasmic reticulum membrane fusion"/>
    <property type="evidence" value="ECO:0000318"/>
    <property type="project" value="GO_Central"/>
</dbReference>
<dbReference type="CDD" id="cd01851">
    <property type="entry name" value="GBP"/>
    <property type="match status" value="1"/>
</dbReference>
<dbReference type="FunFam" id="3.40.50.300:FF:002271">
    <property type="entry name" value="Protein ROOT HAIR DEFECTIVE 3 homolog"/>
    <property type="match status" value="1"/>
</dbReference>
<dbReference type="Gene3D" id="3.40.50.300">
    <property type="entry name" value="P-loop containing nucleotide triphosphate hydrolases"/>
    <property type="match status" value="1"/>
</dbReference>
<dbReference type="HAMAP" id="MF_03109">
    <property type="entry name" value="Sey1"/>
    <property type="match status" value="1"/>
</dbReference>
<dbReference type="InterPro" id="IPR030386">
    <property type="entry name" value="G_GB1_RHD3_dom"/>
</dbReference>
<dbReference type="InterPro" id="IPR027417">
    <property type="entry name" value="P-loop_NTPase"/>
</dbReference>
<dbReference type="InterPro" id="IPR008803">
    <property type="entry name" value="RHD3/Sey1"/>
</dbReference>
<dbReference type="InterPro" id="IPR046758">
    <property type="entry name" value="Sey1/RHD3-like_3HB"/>
</dbReference>
<dbReference type="PANTHER" id="PTHR45923:SF20">
    <property type="entry name" value="PROTEIN ROOT HAIR DEFECTIVE 3 HOMOLOG 2"/>
    <property type="match status" value="1"/>
</dbReference>
<dbReference type="PANTHER" id="PTHR45923">
    <property type="entry name" value="PROTEIN SEY1"/>
    <property type="match status" value="1"/>
</dbReference>
<dbReference type="Pfam" id="PF05879">
    <property type="entry name" value="RHD3_GTPase"/>
    <property type="match status" value="1"/>
</dbReference>
<dbReference type="Pfam" id="PF20428">
    <property type="entry name" value="Sey1_3HB"/>
    <property type="match status" value="1"/>
</dbReference>
<dbReference type="SUPFAM" id="SSF52540">
    <property type="entry name" value="P-loop containing nucleoside triphosphate hydrolases"/>
    <property type="match status" value="1"/>
</dbReference>
<dbReference type="PROSITE" id="PS51715">
    <property type="entry name" value="G_GB1_RHD3"/>
    <property type="match status" value="1"/>
</dbReference>
<keyword id="KW-0175">Coiled coil</keyword>
<keyword id="KW-0256">Endoplasmic reticulum</keyword>
<keyword id="KW-0342">GTP-binding</keyword>
<keyword id="KW-0378">Hydrolase</keyword>
<keyword id="KW-0472">Membrane</keyword>
<keyword id="KW-0547">Nucleotide-binding</keyword>
<keyword id="KW-1185">Reference proteome</keyword>
<keyword id="KW-0812">Transmembrane</keyword>
<keyword id="KW-1133">Transmembrane helix</keyword>
<protein>
    <recommendedName>
        <fullName evidence="1">Protein ROOT HAIR DEFECTIVE 3 homolog 1</fullName>
        <ecNumber evidence="1">3.6.5.-</ecNumber>
    </recommendedName>
    <alternativeName>
        <fullName evidence="1">Protein SEY1 homolog 2</fullName>
    </alternativeName>
</protein>